<comment type="function">
    <text evidence="1">Produces ATP from ADP in the presence of a proton gradient across the membrane.</text>
</comment>
<comment type="subunit">
    <text>F-type ATPases have 2 components, CF(1) - the catalytic core - and CF(0) - the membrane proton channel. CF(1) has five subunits: alpha(3), beta(3), gamma(1), delta(1), epsilon(1). CF(0) has three main subunits: a, b and c.</text>
</comment>
<comment type="subcellular location">
    <subcellularLocation>
        <location evidence="1">Cell inner membrane</location>
        <topology evidence="1">Peripheral membrane protein</topology>
    </subcellularLocation>
</comment>
<comment type="similarity">
    <text evidence="1">Belongs to the ATPase epsilon chain family.</text>
</comment>
<proteinExistence type="inferred from homology"/>
<feature type="chain" id="PRO_0000265837" description="ATP synthase epsilon chain">
    <location>
        <begin position="1"/>
        <end position="135"/>
    </location>
</feature>
<evidence type="ECO:0000255" key="1">
    <source>
        <dbReference type="HAMAP-Rule" id="MF_00530"/>
    </source>
</evidence>
<protein>
    <recommendedName>
        <fullName evidence="1">ATP synthase epsilon chain</fullName>
    </recommendedName>
    <alternativeName>
        <fullName evidence="1">ATP synthase F1 sector epsilon subunit</fullName>
    </alternativeName>
    <alternativeName>
        <fullName evidence="1">F-ATPase epsilon subunit</fullName>
    </alternativeName>
</protein>
<sequence length="135" mass="14767">MAKTFTFELVSPERLLLSEEVEQVVIPGTEGEMTVMAEHAPVMTGIKPGVITVVRAGSEREQFVVFGGFADITPDGCRLLAESATRVKELDRADLARRIEEVRAEVQGARDHETRTKAEEFLGQLTTLEGALLPA</sequence>
<dbReference type="EMBL" id="CP000390">
    <property type="protein sequence ID" value="ABG64591.1"/>
    <property type="molecule type" value="Genomic_DNA"/>
</dbReference>
<dbReference type="SMR" id="Q11DD4"/>
<dbReference type="STRING" id="266779.Meso_3219"/>
<dbReference type="KEGG" id="mes:Meso_3219"/>
<dbReference type="eggNOG" id="COG0355">
    <property type="taxonomic scope" value="Bacteria"/>
</dbReference>
<dbReference type="HOGENOM" id="CLU_084338_2_1_5"/>
<dbReference type="OrthoDB" id="9799969at2"/>
<dbReference type="GO" id="GO:0005886">
    <property type="term" value="C:plasma membrane"/>
    <property type="evidence" value="ECO:0007669"/>
    <property type="project" value="UniProtKB-SubCell"/>
</dbReference>
<dbReference type="GO" id="GO:0045259">
    <property type="term" value="C:proton-transporting ATP synthase complex"/>
    <property type="evidence" value="ECO:0007669"/>
    <property type="project" value="UniProtKB-KW"/>
</dbReference>
<dbReference type="GO" id="GO:0005524">
    <property type="term" value="F:ATP binding"/>
    <property type="evidence" value="ECO:0007669"/>
    <property type="project" value="UniProtKB-UniRule"/>
</dbReference>
<dbReference type="GO" id="GO:0046933">
    <property type="term" value="F:proton-transporting ATP synthase activity, rotational mechanism"/>
    <property type="evidence" value="ECO:0007669"/>
    <property type="project" value="UniProtKB-UniRule"/>
</dbReference>
<dbReference type="CDD" id="cd12152">
    <property type="entry name" value="F1-ATPase_delta"/>
    <property type="match status" value="1"/>
</dbReference>
<dbReference type="Gene3D" id="2.60.15.10">
    <property type="entry name" value="F0F1 ATP synthase delta/epsilon subunit, N-terminal"/>
    <property type="match status" value="1"/>
</dbReference>
<dbReference type="HAMAP" id="MF_00530">
    <property type="entry name" value="ATP_synth_epsil_bac"/>
    <property type="match status" value="1"/>
</dbReference>
<dbReference type="InterPro" id="IPR001469">
    <property type="entry name" value="ATP_synth_F1_dsu/esu"/>
</dbReference>
<dbReference type="InterPro" id="IPR020546">
    <property type="entry name" value="ATP_synth_F1_dsu/esu_N"/>
</dbReference>
<dbReference type="InterPro" id="IPR036771">
    <property type="entry name" value="ATPsynth_dsu/esu_N"/>
</dbReference>
<dbReference type="NCBIfam" id="TIGR01216">
    <property type="entry name" value="ATP_synt_epsi"/>
    <property type="match status" value="1"/>
</dbReference>
<dbReference type="NCBIfam" id="NF001851">
    <property type="entry name" value="PRK00571.2-4"/>
    <property type="match status" value="1"/>
</dbReference>
<dbReference type="PANTHER" id="PTHR13822">
    <property type="entry name" value="ATP SYNTHASE DELTA/EPSILON CHAIN"/>
    <property type="match status" value="1"/>
</dbReference>
<dbReference type="PANTHER" id="PTHR13822:SF10">
    <property type="entry name" value="ATP SYNTHASE EPSILON CHAIN, CHLOROPLASTIC"/>
    <property type="match status" value="1"/>
</dbReference>
<dbReference type="Pfam" id="PF02823">
    <property type="entry name" value="ATP-synt_DE_N"/>
    <property type="match status" value="1"/>
</dbReference>
<dbReference type="SUPFAM" id="SSF51344">
    <property type="entry name" value="Epsilon subunit of F1F0-ATP synthase N-terminal domain"/>
    <property type="match status" value="1"/>
</dbReference>
<gene>
    <name evidence="1" type="primary">atpC</name>
    <name type="ordered locus">Meso_3219</name>
</gene>
<organism>
    <name type="scientific">Chelativorans sp. (strain BNC1)</name>
    <dbReference type="NCBI Taxonomy" id="266779"/>
    <lineage>
        <taxon>Bacteria</taxon>
        <taxon>Pseudomonadati</taxon>
        <taxon>Pseudomonadota</taxon>
        <taxon>Alphaproteobacteria</taxon>
        <taxon>Hyphomicrobiales</taxon>
        <taxon>Phyllobacteriaceae</taxon>
        <taxon>Chelativorans</taxon>
    </lineage>
</organism>
<name>ATPE_CHESB</name>
<accession>Q11DD4</accession>
<keyword id="KW-0066">ATP synthesis</keyword>
<keyword id="KW-0997">Cell inner membrane</keyword>
<keyword id="KW-1003">Cell membrane</keyword>
<keyword id="KW-0139">CF(1)</keyword>
<keyword id="KW-0375">Hydrogen ion transport</keyword>
<keyword id="KW-0406">Ion transport</keyword>
<keyword id="KW-0472">Membrane</keyword>
<keyword id="KW-0813">Transport</keyword>
<reference key="1">
    <citation type="submission" date="2006-06" db="EMBL/GenBank/DDBJ databases">
        <title>Complete sequence of chromosome of Mesorhizobium sp. BNC1.</title>
        <authorList>
            <consortium name="US DOE Joint Genome Institute"/>
            <person name="Copeland A."/>
            <person name="Lucas S."/>
            <person name="Lapidus A."/>
            <person name="Barry K."/>
            <person name="Detter J.C."/>
            <person name="Glavina del Rio T."/>
            <person name="Hammon N."/>
            <person name="Israni S."/>
            <person name="Dalin E."/>
            <person name="Tice H."/>
            <person name="Pitluck S."/>
            <person name="Chertkov O."/>
            <person name="Brettin T."/>
            <person name="Bruce D."/>
            <person name="Han C."/>
            <person name="Tapia R."/>
            <person name="Gilna P."/>
            <person name="Schmutz J."/>
            <person name="Larimer F."/>
            <person name="Land M."/>
            <person name="Hauser L."/>
            <person name="Kyrpides N."/>
            <person name="Mikhailova N."/>
            <person name="Richardson P."/>
        </authorList>
    </citation>
    <scope>NUCLEOTIDE SEQUENCE [LARGE SCALE GENOMIC DNA]</scope>
    <source>
        <strain>BNC1</strain>
    </source>
</reference>